<proteinExistence type="inferred from homology"/>
<gene>
    <name evidence="1" type="primary">frr</name>
    <name type="ordered locus">Xaut_4436</name>
</gene>
<evidence type="ECO:0000255" key="1">
    <source>
        <dbReference type="HAMAP-Rule" id="MF_00040"/>
    </source>
</evidence>
<organism>
    <name type="scientific">Xanthobacter autotrophicus (strain ATCC BAA-1158 / Py2)</name>
    <dbReference type="NCBI Taxonomy" id="78245"/>
    <lineage>
        <taxon>Bacteria</taxon>
        <taxon>Pseudomonadati</taxon>
        <taxon>Pseudomonadota</taxon>
        <taxon>Alphaproteobacteria</taxon>
        <taxon>Hyphomicrobiales</taxon>
        <taxon>Xanthobacteraceae</taxon>
        <taxon>Xanthobacter</taxon>
    </lineage>
</organism>
<dbReference type="EMBL" id="CP000781">
    <property type="protein sequence ID" value="ABS69657.1"/>
    <property type="molecule type" value="Genomic_DNA"/>
</dbReference>
<dbReference type="SMR" id="A7INR3"/>
<dbReference type="STRING" id="78245.Xaut_4436"/>
<dbReference type="KEGG" id="xau:Xaut_4436"/>
<dbReference type="eggNOG" id="COG0233">
    <property type="taxonomic scope" value="Bacteria"/>
</dbReference>
<dbReference type="HOGENOM" id="CLU_073981_2_0_5"/>
<dbReference type="OrthoDB" id="9804006at2"/>
<dbReference type="PhylomeDB" id="A7INR3"/>
<dbReference type="Proteomes" id="UP000002417">
    <property type="component" value="Chromosome"/>
</dbReference>
<dbReference type="GO" id="GO:0005829">
    <property type="term" value="C:cytosol"/>
    <property type="evidence" value="ECO:0007669"/>
    <property type="project" value="GOC"/>
</dbReference>
<dbReference type="GO" id="GO:0043023">
    <property type="term" value="F:ribosomal large subunit binding"/>
    <property type="evidence" value="ECO:0007669"/>
    <property type="project" value="TreeGrafter"/>
</dbReference>
<dbReference type="GO" id="GO:0002184">
    <property type="term" value="P:cytoplasmic translational termination"/>
    <property type="evidence" value="ECO:0007669"/>
    <property type="project" value="TreeGrafter"/>
</dbReference>
<dbReference type="CDD" id="cd00520">
    <property type="entry name" value="RRF"/>
    <property type="match status" value="1"/>
</dbReference>
<dbReference type="FunFam" id="1.10.132.20:FF:000001">
    <property type="entry name" value="Ribosome-recycling factor"/>
    <property type="match status" value="1"/>
</dbReference>
<dbReference type="FunFam" id="3.30.1360.40:FF:000001">
    <property type="entry name" value="Ribosome-recycling factor"/>
    <property type="match status" value="1"/>
</dbReference>
<dbReference type="Gene3D" id="3.30.1360.40">
    <property type="match status" value="1"/>
</dbReference>
<dbReference type="Gene3D" id="1.10.132.20">
    <property type="entry name" value="Ribosome-recycling factor"/>
    <property type="match status" value="1"/>
</dbReference>
<dbReference type="HAMAP" id="MF_00040">
    <property type="entry name" value="RRF"/>
    <property type="match status" value="1"/>
</dbReference>
<dbReference type="InterPro" id="IPR002661">
    <property type="entry name" value="Ribosome_recyc_fac"/>
</dbReference>
<dbReference type="InterPro" id="IPR023584">
    <property type="entry name" value="Ribosome_recyc_fac_dom"/>
</dbReference>
<dbReference type="InterPro" id="IPR036191">
    <property type="entry name" value="RRF_sf"/>
</dbReference>
<dbReference type="NCBIfam" id="TIGR00496">
    <property type="entry name" value="frr"/>
    <property type="match status" value="1"/>
</dbReference>
<dbReference type="PANTHER" id="PTHR20982:SF3">
    <property type="entry name" value="MITOCHONDRIAL RIBOSOME RECYCLING FACTOR PSEUDO 1"/>
    <property type="match status" value="1"/>
</dbReference>
<dbReference type="PANTHER" id="PTHR20982">
    <property type="entry name" value="RIBOSOME RECYCLING FACTOR"/>
    <property type="match status" value="1"/>
</dbReference>
<dbReference type="Pfam" id="PF01765">
    <property type="entry name" value="RRF"/>
    <property type="match status" value="1"/>
</dbReference>
<dbReference type="SUPFAM" id="SSF55194">
    <property type="entry name" value="Ribosome recycling factor, RRF"/>
    <property type="match status" value="1"/>
</dbReference>
<name>RRF_XANP2</name>
<reference key="1">
    <citation type="submission" date="2007-07" db="EMBL/GenBank/DDBJ databases">
        <title>Complete sequence of chromosome of Xanthobacter autotrophicus Py2.</title>
        <authorList>
            <consortium name="US DOE Joint Genome Institute"/>
            <person name="Copeland A."/>
            <person name="Lucas S."/>
            <person name="Lapidus A."/>
            <person name="Barry K."/>
            <person name="Glavina del Rio T."/>
            <person name="Hammon N."/>
            <person name="Israni S."/>
            <person name="Dalin E."/>
            <person name="Tice H."/>
            <person name="Pitluck S."/>
            <person name="Sims D."/>
            <person name="Brettin T."/>
            <person name="Bruce D."/>
            <person name="Detter J.C."/>
            <person name="Han C."/>
            <person name="Tapia R."/>
            <person name="Brainard J."/>
            <person name="Schmutz J."/>
            <person name="Larimer F."/>
            <person name="Land M."/>
            <person name="Hauser L."/>
            <person name="Kyrpides N."/>
            <person name="Kim E."/>
            <person name="Ensigns S.A."/>
            <person name="Richardson P."/>
        </authorList>
    </citation>
    <scope>NUCLEOTIDE SEQUENCE [LARGE SCALE GENOMIC DNA]</scope>
    <source>
        <strain>ATCC BAA-1158 / Py2</strain>
    </source>
</reference>
<accession>A7INR3</accession>
<sequence>MTTGTFDMSDLKRRMQGAVGVLRDELGGLRTGRASASLLDPITIEAYGARMPLNQVATVSVPEARLLSVQVWDRGMVSAVEKAIRDSNLGLNPNTEGQVLRLRIPELNQERRQELVKVAHKYAEAAKVAVRHVRRDGMDHLKKVEKDGEMSSDDLDRLSKDVQKATDETIAEIDQTLAQKEKEILSV</sequence>
<keyword id="KW-0963">Cytoplasm</keyword>
<keyword id="KW-0648">Protein biosynthesis</keyword>
<keyword id="KW-1185">Reference proteome</keyword>
<feature type="chain" id="PRO_1000090805" description="Ribosome-recycling factor">
    <location>
        <begin position="1"/>
        <end position="187"/>
    </location>
</feature>
<comment type="function">
    <text evidence="1">Responsible for the release of ribosomes from messenger RNA at the termination of protein biosynthesis. May increase the efficiency of translation by recycling ribosomes from one round of translation to another.</text>
</comment>
<comment type="subcellular location">
    <subcellularLocation>
        <location evidence="1">Cytoplasm</location>
    </subcellularLocation>
</comment>
<comment type="similarity">
    <text evidence="1">Belongs to the RRF family.</text>
</comment>
<protein>
    <recommendedName>
        <fullName evidence="1">Ribosome-recycling factor</fullName>
        <shortName evidence="1">RRF</shortName>
    </recommendedName>
    <alternativeName>
        <fullName evidence="1">Ribosome-releasing factor</fullName>
    </alternativeName>
</protein>